<gene>
    <name type="ORF">GG21441</name>
</gene>
<organism>
    <name type="scientific">Drosophila erecta</name>
    <name type="common">Fruit fly</name>
    <dbReference type="NCBI Taxonomy" id="7220"/>
    <lineage>
        <taxon>Eukaryota</taxon>
        <taxon>Metazoa</taxon>
        <taxon>Ecdysozoa</taxon>
        <taxon>Arthropoda</taxon>
        <taxon>Hexapoda</taxon>
        <taxon>Insecta</taxon>
        <taxon>Pterygota</taxon>
        <taxon>Neoptera</taxon>
        <taxon>Endopterygota</taxon>
        <taxon>Diptera</taxon>
        <taxon>Brachycera</taxon>
        <taxon>Muscomorpha</taxon>
        <taxon>Ephydroidea</taxon>
        <taxon>Drosophilidae</taxon>
        <taxon>Drosophila</taxon>
        <taxon>Sophophora</taxon>
    </lineage>
</organism>
<protein>
    <recommendedName>
        <fullName evidence="2 8">Serine/threonine-protein kinase GG21441</fullName>
        <ecNumber>2.7.11.1</ecNumber>
    </recommendedName>
    <alternativeName>
        <fullName>Doublecortin-like and CAM kinase-like protein</fullName>
    </alternativeName>
</protein>
<accession>B3NKK1</accession>
<proteinExistence type="inferred from homology"/>
<feature type="chain" id="PRO_0000392566" description="Serine/threonine-protein kinase GG21441">
    <location>
        <begin position="1"/>
        <end position="745"/>
    </location>
</feature>
<feature type="domain" description="Doublecortin 1" evidence="4">
    <location>
        <begin position="159"/>
        <end position="245"/>
    </location>
</feature>
<feature type="domain" description="Doublecortin 2" evidence="4">
    <location>
        <begin position="315"/>
        <end position="398"/>
    </location>
</feature>
<feature type="domain" description="Protein kinase" evidence="5">
    <location>
        <begin position="479"/>
        <end position="737"/>
    </location>
</feature>
<feature type="region of interest" description="Disordered" evidence="7">
    <location>
        <begin position="49"/>
        <end position="73"/>
    </location>
</feature>
<feature type="compositionally biased region" description="Basic and acidic residues" evidence="7">
    <location>
        <begin position="57"/>
        <end position="67"/>
    </location>
</feature>
<feature type="active site" description="Proton acceptor" evidence="1 5 6">
    <location>
        <position position="600"/>
    </location>
</feature>
<feature type="binding site" evidence="1 5">
    <location>
        <begin position="485"/>
        <end position="493"/>
    </location>
    <ligand>
        <name>ATP</name>
        <dbReference type="ChEBI" id="CHEBI:30616"/>
    </ligand>
</feature>
<feature type="binding site" evidence="1 5">
    <location>
        <position position="508"/>
    </location>
    <ligand>
        <name>ATP</name>
        <dbReference type="ChEBI" id="CHEBI:30616"/>
    </ligand>
</feature>
<sequence>MEFDEIKKHSLNCNADVLSSLQASAPASSPHTVTLKVNAVAEATITEKRNQQQNVQKDFDSHNRDCDSPVSSTSELEKEFDDLRNLHTSSLTNSVVLGKSIGSLNGDYSVTSASSRTKTLENVVTIDSASGSTCLAIASPVDHIKKRIPNSRTPTRKALRIKFYRNGDRFYPGITIPVSNERYRSFERLYEDLTRLLEENVKIPGAVRTIYNMCGKKITSLDELEDGQSYVCSCNNENFKKVEYNTGSQPLSNLTLTNNSRSNNQRLAKCRPASPLKNGLLTGISPLPASGGGTGNGSPLIASRLSDRVSVVHPRIVTLIRSGTKPRRIMRLLLNKRNSPSFDHVLTAITQVVRLDTGYVRKVFTLSGISVVQLSDFFGSDDVFFAYGTERINYAEDFKLEAEEYRAINVIRKTMRTAGTTCKGPKPKMPIKSKKVYPPLVDSEVLKAATSPEDDSHATLLTSTGIEINELPLNIRNTYTLGRIIGDGNFAIVFKIKHRQTGDSYALKIIDKNKCKGKEHYIDAEVRVMKKLNHPHIISLILSVDQNTNMYLVLEYVSGGDLFDAITQVTRFSESQSRIMIRHLGAAMTYLHSMGIVHRDIKPENLLVKLDEHGNVLELKLADFGLACEVNDLLYAVCGTPTYVAPEILLEVGYGLKIDVWAAGIILYILLCGFPPFVAPDNQQEPLFDAIISGIYEFPDPYWSDIGDGVRDLIANMLQSDPDVRFTSEDILDHYWTIGNKGNDL</sequence>
<keyword id="KW-0067">ATP-binding</keyword>
<keyword id="KW-0418">Kinase</keyword>
<keyword id="KW-0547">Nucleotide-binding</keyword>
<keyword id="KW-0597">Phosphoprotein</keyword>
<keyword id="KW-0677">Repeat</keyword>
<keyword id="KW-0723">Serine/threonine-protein kinase</keyword>
<keyword id="KW-0808">Transferase</keyword>
<comment type="catalytic activity">
    <reaction evidence="1">
        <text>L-seryl-[protein] + ATP = O-phospho-L-seryl-[protein] + ADP + H(+)</text>
        <dbReference type="Rhea" id="RHEA:17989"/>
        <dbReference type="Rhea" id="RHEA-COMP:9863"/>
        <dbReference type="Rhea" id="RHEA-COMP:11604"/>
        <dbReference type="ChEBI" id="CHEBI:15378"/>
        <dbReference type="ChEBI" id="CHEBI:29999"/>
        <dbReference type="ChEBI" id="CHEBI:30616"/>
        <dbReference type="ChEBI" id="CHEBI:83421"/>
        <dbReference type="ChEBI" id="CHEBI:456216"/>
        <dbReference type="EC" id="2.7.11.1"/>
    </reaction>
</comment>
<comment type="catalytic activity">
    <reaction evidence="1">
        <text>L-threonyl-[protein] + ATP = O-phospho-L-threonyl-[protein] + ADP + H(+)</text>
        <dbReference type="Rhea" id="RHEA:46608"/>
        <dbReference type="Rhea" id="RHEA-COMP:11060"/>
        <dbReference type="Rhea" id="RHEA-COMP:11605"/>
        <dbReference type="ChEBI" id="CHEBI:15378"/>
        <dbReference type="ChEBI" id="CHEBI:30013"/>
        <dbReference type="ChEBI" id="CHEBI:30616"/>
        <dbReference type="ChEBI" id="CHEBI:61977"/>
        <dbReference type="ChEBI" id="CHEBI:456216"/>
        <dbReference type="EC" id="2.7.11.1"/>
    </reaction>
</comment>
<comment type="similarity">
    <text evidence="3">Belongs to the protein kinase superfamily. CAMK Ser/Thr protein kinase family. CaMK subfamily.</text>
</comment>
<reference evidence="8" key="1">
    <citation type="journal article" date="2007" name="Nature">
        <title>Evolution of genes and genomes on the Drosophila phylogeny.</title>
        <authorList>
            <consortium name="Drosophila 12 genomes consortium"/>
        </authorList>
    </citation>
    <scope>NUCLEOTIDE SEQUENCE [LARGE SCALE GENOMIC DNA]</scope>
    <source>
        <strain evidence="8">Tucson 14021-0224.01</strain>
    </source>
</reference>
<name>DCLK_DROER</name>
<dbReference type="EC" id="2.7.11.1"/>
<dbReference type="EMBL" id="CH954179">
    <property type="protein sequence ID" value="EDV54305.1"/>
    <property type="molecule type" value="Genomic_DNA"/>
</dbReference>
<dbReference type="SMR" id="B3NKK1"/>
<dbReference type="EnsemblMetazoa" id="FBtr0141495">
    <property type="protein sequence ID" value="FBpp0139987"/>
    <property type="gene ID" value="FBgn0113620"/>
</dbReference>
<dbReference type="EnsemblMetazoa" id="XM_001973869.3">
    <property type="protein sequence ID" value="XP_001973905.1"/>
    <property type="gene ID" value="LOC6548606"/>
</dbReference>
<dbReference type="EnsemblMetazoa" id="XM_026982865.1">
    <property type="protein sequence ID" value="XP_026838666.1"/>
    <property type="gene ID" value="LOC6548606"/>
</dbReference>
<dbReference type="GeneID" id="6548606"/>
<dbReference type="KEGG" id="der:6548606"/>
<dbReference type="eggNOG" id="KOG0032">
    <property type="taxonomic scope" value="Eukaryota"/>
</dbReference>
<dbReference type="eggNOG" id="KOG3757">
    <property type="taxonomic scope" value="Eukaryota"/>
</dbReference>
<dbReference type="HOGENOM" id="CLU_000288_94_1_1"/>
<dbReference type="OMA" id="LMTECKV"/>
<dbReference type="OrthoDB" id="1738954at2759"/>
<dbReference type="PhylomeDB" id="B3NKK1"/>
<dbReference type="Proteomes" id="UP000008711">
    <property type="component" value="Unassembled WGS sequence"/>
</dbReference>
<dbReference type="GO" id="GO:0005524">
    <property type="term" value="F:ATP binding"/>
    <property type="evidence" value="ECO:0007669"/>
    <property type="project" value="UniProtKB-KW"/>
</dbReference>
<dbReference type="GO" id="GO:0106310">
    <property type="term" value="F:protein serine kinase activity"/>
    <property type="evidence" value="ECO:0007669"/>
    <property type="project" value="RHEA"/>
</dbReference>
<dbReference type="GO" id="GO:0004674">
    <property type="term" value="F:protein serine/threonine kinase activity"/>
    <property type="evidence" value="ECO:0000250"/>
    <property type="project" value="UniProtKB"/>
</dbReference>
<dbReference type="GO" id="GO:0035556">
    <property type="term" value="P:intracellular signal transduction"/>
    <property type="evidence" value="ECO:0007669"/>
    <property type="project" value="InterPro"/>
</dbReference>
<dbReference type="CDD" id="cd16109">
    <property type="entry name" value="DCX1"/>
    <property type="match status" value="1"/>
</dbReference>
<dbReference type="CDD" id="cd17069">
    <property type="entry name" value="DCX2"/>
    <property type="match status" value="1"/>
</dbReference>
<dbReference type="FunFam" id="3.30.200.20:FF:000042">
    <property type="entry name" value="Aurora kinase A"/>
    <property type="match status" value="1"/>
</dbReference>
<dbReference type="FunFam" id="1.10.510.10:FF:000866">
    <property type="entry name" value="Serine/threonine-protein kinase GA29083"/>
    <property type="match status" value="1"/>
</dbReference>
<dbReference type="FunFam" id="3.10.20.230:FF:000017">
    <property type="entry name" value="Serine/threonine-protein kinase GA29083"/>
    <property type="match status" value="1"/>
</dbReference>
<dbReference type="FunFam" id="3.10.20.230:FF:000021">
    <property type="entry name" value="Serine/threonine-protein kinase GA29083"/>
    <property type="match status" value="1"/>
</dbReference>
<dbReference type="Gene3D" id="3.10.20.230">
    <property type="entry name" value="Doublecortin domain"/>
    <property type="match status" value="2"/>
</dbReference>
<dbReference type="Gene3D" id="1.10.510.10">
    <property type="entry name" value="Transferase(Phosphotransferase) domain 1"/>
    <property type="match status" value="1"/>
</dbReference>
<dbReference type="InterPro" id="IPR003533">
    <property type="entry name" value="Doublecortin_dom"/>
</dbReference>
<dbReference type="InterPro" id="IPR036572">
    <property type="entry name" value="Doublecortin_dom_sf"/>
</dbReference>
<dbReference type="InterPro" id="IPR011009">
    <property type="entry name" value="Kinase-like_dom_sf"/>
</dbReference>
<dbReference type="InterPro" id="IPR000719">
    <property type="entry name" value="Prot_kinase_dom"/>
</dbReference>
<dbReference type="InterPro" id="IPR017441">
    <property type="entry name" value="Protein_kinase_ATP_BS"/>
</dbReference>
<dbReference type="InterPro" id="IPR008271">
    <property type="entry name" value="Ser/Thr_kinase_AS"/>
</dbReference>
<dbReference type="PANTHER" id="PTHR24347">
    <property type="entry name" value="SERINE/THREONINE-PROTEIN KINASE"/>
    <property type="match status" value="1"/>
</dbReference>
<dbReference type="Pfam" id="PF03607">
    <property type="entry name" value="DCX"/>
    <property type="match status" value="2"/>
</dbReference>
<dbReference type="Pfam" id="PF00069">
    <property type="entry name" value="Pkinase"/>
    <property type="match status" value="1"/>
</dbReference>
<dbReference type="SMART" id="SM00537">
    <property type="entry name" value="DCX"/>
    <property type="match status" value="2"/>
</dbReference>
<dbReference type="SMART" id="SM00220">
    <property type="entry name" value="S_TKc"/>
    <property type="match status" value="1"/>
</dbReference>
<dbReference type="SUPFAM" id="SSF89837">
    <property type="entry name" value="Doublecortin (DC)"/>
    <property type="match status" value="2"/>
</dbReference>
<dbReference type="SUPFAM" id="SSF56112">
    <property type="entry name" value="Protein kinase-like (PK-like)"/>
    <property type="match status" value="1"/>
</dbReference>
<dbReference type="PROSITE" id="PS50309">
    <property type="entry name" value="DC"/>
    <property type="match status" value="2"/>
</dbReference>
<dbReference type="PROSITE" id="PS00107">
    <property type="entry name" value="PROTEIN_KINASE_ATP"/>
    <property type="match status" value="1"/>
</dbReference>
<dbReference type="PROSITE" id="PS50011">
    <property type="entry name" value="PROTEIN_KINASE_DOM"/>
    <property type="match status" value="1"/>
</dbReference>
<dbReference type="PROSITE" id="PS00108">
    <property type="entry name" value="PROTEIN_KINASE_ST"/>
    <property type="match status" value="1"/>
</dbReference>
<evidence type="ECO:0000250" key="1">
    <source>
        <dbReference type="UniProtKB" id="P28523"/>
    </source>
</evidence>
<evidence type="ECO:0000250" key="2">
    <source>
        <dbReference type="UniProtKB" id="Q7PLI7"/>
    </source>
</evidence>
<evidence type="ECO:0000255" key="3"/>
<evidence type="ECO:0000255" key="4">
    <source>
        <dbReference type="PROSITE-ProRule" id="PRU00072"/>
    </source>
</evidence>
<evidence type="ECO:0000255" key="5">
    <source>
        <dbReference type="PROSITE-ProRule" id="PRU00159"/>
    </source>
</evidence>
<evidence type="ECO:0000255" key="6">
    <source>
        <dbReference type="PROSITE-ProRule" id="PRU10027"/>
    </source>
</evidence>
<evidence type="ECO:0000256" key="7">
    <source>
        <dbReference type="SAM" id="MobiDB-lite"/>
    </source>
</evidence>
<evidence type="ECO:0000312" key="8">
    <source>
        <dbReference type="EMBL" id="EDV54305.1"/>
    </source>
</evidence>